<accession>Q97F94</accession>
<protein>
    <recommendedName>
        <fullName evidence="1">Protein translocase subunit SecA</fullName>
        <ecNumber evidence="1">7.4.2.8</ecNumber>
    </recommendedName>
</protein>
<organism>
    <name type="scientific">Clostridium acetobutylicum (strain ATCC 824 / DSM 792 / JCM 1419 / IAM 19013 / LMG 5710 / NBRC 13948 / NRRL B-527 / VKM B-1787 / 2291 / W)</name>
    <dbReference type="NCBI Taxonomy" id="272562"/>
    <lineage>
        <taxon>Bacteria</taxon>
        <taxon>Bacillati</taxon>
        <taxon>Bacillota</taxon>
        <taxon>Clostridia</taxon>
        <taxon>Eubacteriales</taxon>
        <taxon>Clostridiaceae</taxon>
        <taxon>Clostridium</taxon>
    </lineage>
</organism>
<reference key="1">
    <citation type="journal article" date="2001" name="J. Bacteriol.">
        <title>Genome sequence and comparative analysis of the solvent-producing bacterium Clostridium acetobutylicum.</title>
        <authorList>
            <person name="Noelling J."/>
            <person name="Breton G."/>
            <person name="Omelchenko M.V."/>
            <person name="Makarova K.S."/>
            <person name="Zeng Q."/>
            <person name="Gibson R."/>
            <person name="Lee H.M."/>
            <person name="Dubois J."/>
            <person name="Qiu D."/>
            <person name="Hitti J."/>
            <person name="Wolf Y.I."/>
            <person name="Tatusov R.L."/>
            <person name="Sabathe F."/>
            <person name="Doucette-Stamm L.A."/>
            <person name="Soucaille P."/>
            <person name="Daly M.J."/>
            <person name="Bennett G.N."/>
            <person name="Koonin E.V."/>
            <person name="Smith D.R."/>
        </authorList>
    </citation>
    <scope>NUCLEOTIDE SEQUENCE [LARGE SCALE GENOMIC DNA]</scope>
    <source>
        <strain>ATCC 824 / DSM 792 / JCM 1419 / IAM 19013 / LMG 5710 / NBRC 13948 / NRRL B-527 / VKM B-1787 / 2291 / W</strain>
    </source>
</reference>
<proteinExistence type="inferred from homology"/>
<gene>
    <name evidence="1" type="primary">secA</name>
    <name type="ordered locus">CA_C2846</name>
</gene>
<evidence type="ECO:0000255" key="1">
    <source>
        <dbReference type="HAMAP-Rule" id="MF_01382"/>
    </source>
</evidence>
<evidence type="ECO:0000256" key="2">
    <source>
        <dbReference type="SAM" id="MobiDB-lite"/>
    </source>
</evidence>
<keyword id="KW-0067">ATP-binding</keyword>
<keyword id="KW-1003">Cell membrane</keyword>
<keyword id="KW-0963">Cytoplasm</keyword>
<keyword id="KW-0472">Membrane</keyword>
<keyword id="KW-0479">Metal-binding</keyword>
<keyword id="KW-0547">Nucleotide-binding</keyword>
<keyword id="KW-0653">Protein transport</keyword>
<keyword id="KW-1185">Reference proteome</keyword>
<keyword id="KW-1278">Translocase</keyword>
<keyword id="KW-0811">Translocation</keyword>
<keyword id="KW-0813">Transport</keyword>
<keyword id="KW-0862">Zinc</keyword>
<name>SECA_CLOAB</name>
<dbReference type="EC" id="7.4.2.8" evidence="1"/>
<dbReference type="EMBL" id="AE001437">
    <property type="protein sequence ID" value="AAK80790.1"/>
    <property type="molecule type" value="Genomic_DNA"/>
</dbReference>
<dbReference type="PIR" id="C97250">
    <property type="entry name" value="C97250"/>
</dbReference>
<dbReference type="RefSeq" id="NP_349450.1">
    <property type="nucleotide sequence ID" value="NC_003030.1"/>
</dbReference>
<dbReference type="RefSeq" id="WP_010966131.1">
    <property type="nucleotide sequence ID" value="NC_003030.1"/>
</dbReference>
<dbReference type="SMR" id="Q97F94"/>
<dbReference type="STRING" id="272562.CA_C2846"/>
<dbReference type="GeneID" id="44999331"/>
<dbReference type="KEGG" id="cac:CA_C2846"/>
<dbReference type="PATRIC" id="fig|272562.8.peg.3032"/>
<dbReference type="eggNOG" id="COG0653">
    <property type="taxonomic scope" value="Bacteria"/>
</dbReference>
<dbReference type="HOGENOM" id="CLU_005314_3_0_9"/>
<dbReference type="OrthoDB" id="9805579at2"/>
<dbReference type="Proteomes" id="UP000000814">
    <property type="component" value="Chromosome"/>
</dbReference>
<dbReference type="GO" id="GO:0031522">
    <property type="term" value="C:cell envelope Sec protein transport complex"/>
    <property type="evidence" value="ECO:0007669"/>
    <property type="project" value="TreeGrafter"/>
</dbReference>
<dbReference type="GO" id="GO:0005829">
    <property type="term" value="C:cytosol"/>
    <property type="evidence" value="ECO:0007669"/>
    <property type="project" value="TreeGrafter"/>
</dbReference>
<dbReference type="GO" id="GO:0005886">
    <property type="term" value="C:plasma membrane"/>
    <property type="evidence" value="ECO:0007669"/>
    <property type="project" value="UniProtKB-SubCell"/>
</dbReference>
<dbReference type="GO" id="GO:0005524">
    <property type="term" value="F:ATP binding"/>
    <property type="evidence" value="ECO:0007669"/>
    <property type="project" value="UniProtKB-UniRule"/>
</dbReference>
<dbReference type="GO" id="GO:0046872">
    <property type="term" value="F:metal ion binding"/>
    <property type="evidence" value="ECO:0007669"/>
    <property type="project" value="UniProtKB-KW"/>
</dbReference>
<dbReference type="GO" id="GO:0008564">
    <property type="term" value="F:protein-exporting ATPase activity"/>
    <property type="evidence" value="ECO:0007669"/>
    <property type="project" value="UniProtKB-EC"/>
</dbReference>
<dbReference type="GO" id="GO:0065002">
    <property type="term" value="P:intracellular protein transmembrane transport"/>
    <property type="evidence" value="ECO:0007669"/>
    <property type="project" value="UniProtKB-UniRule"/>
</dbReference>
<dbReference type="GO" id="GO:0017038">
    <property type="term" value="P:protein import"/>
    <property type="evidence" value="ECO:0007669"/>
    <property type="project" value="InterPro"/>
</dbReference>
<dbReference type="GO" id="GO:0006605">
    <property type="term" value="P:protein targeting"/>
    <property type="evidence" value="ECO:0007669"/>
    <property type="project" value="UniProtKB-UniRule"/>
</dbReference>
<dbReference type="GO" id="GO:0043952">
    <property type="term" value="P:protein transport by the Sec complex"/>
    <property type="evidence" value="ECO:0007669"/>
    <property type="project" value="TreeGrafter"/>
</dbReference>
<dbReference type="CDD" id="cd17928">
    <property type="entry name" value="DEXDc_SecA"/>
    <property type="match status" value="1"/>
</dbReference>
<dbReference type="CDD" id="cd18803">
    <property type="entry name" value="SF2_C_secA"/>
    <property type="match status" value="1"/>
</dbReference>
<dbReference type="FunFam" id="1.10.3060.10:FF:000002">
    <property type="entry name" value="Preprotein translocase subunit SecA"/>
    <property type="match status" value="1"/>
</dbReference>
<dbReference type="FunFam" id="3.40.50.300:FF:000429">
    <property type="entry name" value="Preprotein translocase subunit SecA"/>
    <property type="match status" value="1"/>
</dbReference>
<dbReference type="FunFam" id="3.90.1440.10:FF:000001">
    <property type="entry name" value="Preprotein translocase subunit SecA"/>
    <property type="match status" value="1"/>
</dbReference>
<dbReference type="Gene3D" id="1.10.3060.10">
    <property type="entry name" value="Helical scaffold and wing domains of SecA"/>
    <property type="match status" value="1"/>
</dbReference>
<dbReference type="Gene3D" id="3.40.50.300">
    <property type="entry name" value="P-loop containing nucleotide triphosphate hydrolases"/>
    <property type="match status" value="3"/>
</dbReference>
<dbReference type="Gene3D" id="3.90.1440.10">
    <property type="entry name" value="SecA, preprotein cross-linking domain"/>
    <property type="match status" value="1"/>
</dbReference>
<dbReference type="HAMAP" id="MF_01382">
    <property type="entry name" value="SecA"/>
    <property type="match status" value="1"/>
</dbReference>
<dbReference type="InterPro" id="IPR014001">
    <property type="entry name" value="Helicase_ATP-bd"/>
</dbReference>
<dbReference type="InterPro" id="IPR001650">
    <property type="entry name" value="Helicase_C-like"/>
</dbReference>
<dbReference type="InterPro" id="IPR027417">
    <property type="entry name" value="P-loop_NTPase"/>
</dbReference>
<dbReference type="InterPro" id="IPR004027">
    <property type="entry name" value="SEC_C_motif"/>
</dbReference>
<dbReference type="InterPro" id="IPR000185">
    <property type="entry name" value="SecA"/>
</dbReference>
<dbReference type="InterPro" id="IPR020937">
    <property type="entry name" value="SecA_CS"/>
</dbReference>
<dbReference type="InterPro" id="IPR011115">
    <property type="entry name" value="SecA_DEAD"/>
</dbReference>
<dbReference type="InterPro" id="IPR014018">
    <property type="entry name" value="SecA_motor_DEAD"/>
</dbReference>
<dbReference type="InterPro" id="IPR011130">
    <property type="entry name" value="SecA_preprotein_X-link_dom"/>
</dbReference>
<dbReference type="InterPro" id="IPR044722">
    <property type="entry name" value="SecA_SF2_C"/>
</dbReference>
<dbReference type="InterPro" id="IPR011116">
    <property type="entry name" value="SecA_Wing/Scaffold"/>
</dbReference>
<dbReference type="InterPro" id="IPR036266">
    <property type="entry name" value="SecA_Wing/Scaffold_sf"/>
</dbReference>
<dbReference type="InterPro" id="IPR036670">
    <property type="entry name" value="SecA_X-link_sf"/>
</dbReference>
<dbReference type="NCBIfam" id="NF006630">
    <property type="entry name" value="PRK09200.1"/>
    <property type="match status" value="1"/>
</dbReference>
<dbReference type="NCBIfam" id="NF009538">
    <property type="entry name" value="PRK12904.1"/>
    <property type="match status" value="1"/>
</dbReference>
<dbReference type="NCBIfam" id="TIGR00963">
    <property type="entry name" value="secA"/>
    <property type="match status" value="1"/>
</dbReference>
<dbReference type="PANTHER" id="PTHR30612:SF0">
    <property type="entry name" value="CHLOROPLAST PROTEIN-TRANSPORTING ATPASE"/>
    <property type="match status" value="1"/>
</dbReference>
<dbReference type="PANTHER" id="PTHR30612">
    <property type="entry name" value="SECA INNER MEMBRANE COMPONENT OF SEC PROTEIN SECRETION SYSTEM"/>
    <property type="match status" value="1"/>
</dbReference>
<dbReference type="Pfam" id="PF21090">
    <property type="entry name" value="P-loop_SecA"/>
    <property type="match status" value="2"/>
</dbReference>
<dbReference type="Pfam" id="PF02810">
    <property type="entry name" value="SEC-C"/>
    <property type="match status" value="1"/>
</dbReference>
<dbReference type="Pfam" id="PF07517">
    <property type="entry name" value="SecA_DEAD"/>
    <property type="match status" value="1"/>
</dbReference>
<dbReference type="Pfam" id="PF01043">
    <property type="entry name" value="SecA_PP_bind"/>
    <property type="match status" value="1"/>
</dbReference>
<dbReference type="Pfam" id="PF07516">
    <property type="entry name" value="SecA_SW"/>
    <property type="match status" value="1"/>
</dbReference>
<dbReference type="PRINTS" id="PR00906">
    <property type="entry name" value="SECA"/>
</dbReference>
<dbReference type="SMART" id="SM00957">
    <property type="entry name" value="SecA_DEAD"/>
    <property type="match status" value="1"/>
</dbReference>
<dbReference type="SMART" id="SM00958">
    <property type="entry name" value="SecA_PP_bind"/>
    <property type="match status" value="1"/>
</dbReference>
<dbReference type="SUPFAM" id="SSF81886">
    <property type="entry name" value="Helical scaffold and wing domains of SecA"/>
    <property type="match status" value="1"/>
</dbReference>
<dbReference type="SUPFAM" id="SSF52540">
    <property type="entry name" value="P-loop containing nucleoside triphosphate hydrolases"/>
    <property type="match status" value="2"/>
</dbReference>
<dbReference type="SUPFAM" id="SSF81767">
    <property type="entry name" value="Pre-protein crosslinking domain of SecA"/>
    <property type="match status" value="1"/>
</dbReference>
<dbReference type="PROSITE" id="PS01312">
    <property type="entry name" value="SECA"/>
    <property type="match status" value="1"/>
</dbReference>
<dbReference type="PROSITE" id="PS51196">
    <property type="entry name" value="SECA_MOTOR_DEAD"/>
    <property type="match status" value="1"/>
</dbReference>
<sequence length="839" mass="95759">MGLLEKIFGTYSDREVKRIIPLVDKIDALDGSMQALSEDELKAKTAEFKQRYENGETLDDLLVEAFAVVREASSRILGLKHFREQIIGGIVLHQGRISEMKTGEGKTLVATLPSYLNAITGKGVHVVTVNDYLAKRDMEWMGQLYQYLGLTTGVIVHDLDQKQRQEAYAADITYGTNNEFGFDYLRDNMVIYKEERVQRPLHFCIVDEVDSILIDEARTPLIISGEGEKSTEFYKVADNFAKMLRKEKDFTIDEKTNSAILTDEGVEKAEKYYHIDNYADPQNMEIQHHTSQALKANYLMKRDKDYMVKEDEVVIVDEFTGRLMEGRRYSDGLHQAIEAKEGVKVQKESKTLATITFQNYFRMYEKLSGMTGTALTEEVEFREIYGLDVVVIPTHRPIARIDAPDIVYKTELGKFKAVVEDIVETNKNGQPVLVGTVSIEKSELLSSLLKKRGVRHQVLNAKYHEQEAEIISHAGEKGMVTIATNMAGRGTDIKLGEGVTDVGGLKIIGTERHESRRIDNQLRGRAGRQGDKGYSRFYVSLEDDLMRIFGSDKLKNMVEKLGLGDDDAIESKMVSSAIENAQKKVEGNNFDIRKTLIQYDDVMNKQREIIYKQRSEVLEGENLKDQIEGMIKDLIYNAVNSHISGVDEELESDIEAILNYLDDICLPRGIVEVEELATMSNDEIKEKLYSLAKEIYERKEEEFSSDQMRELERVILLRVVDTKWMDHIDSMEHLKQGIGLRAYKQQDPTQAYQMEGSDMFEEMVENIKVETVRYLFHVQAERAPERQRVVKETEINYSGPDAGDTKKEPVRRKEKKIGRNDLCPCGSGKKYKDCCGRRA</sequence>
<feature type="chain" id="PRO_0000318335" description="Protein translocase subunit SecA">
    <location>
        <begin position="1"/>
        <end position="839"/>
    </location>
</feature>
<feature type="region of interest" description="Disordered" evidence="2">
    <location>
        <begin position="794"/>
        <end position="820"/>
    </location>
</feature>
<feature type="binding site" evidence="1">
    <location>
        <position position="85"/>
    </location>
    <ligand>
        <name>ATP</name>
        <dbReference type="ChEBI" id="CHEBI:30616"/>
    </ligand>
</feature>
<feature type="binding site" evidence="1">
    <location>
        <begin position="103"/>
        <end position="107"/>
    </location>
    <ligand>
        <name>ATP</name>
        <dbReference type="ChEBI" id="CHEBI:30616"/>
    </ligand>
</feature>
<feature type="binding site" evidence="1">
    <location>
        <position position="492"/>
    </location>
    <ligand>
        <name>ATP</name>
        <dbReference type="ChEBI" id="CHEBI:30616"/>
    </ligand>
</feature>
<feature type="binding site" evidence="1">
    <location>
        <position position="823"/>
    </location>
    <ligand>
        <name>Zn(2+)</name>
        <dbReference type="ChEBI" id="CHEBI:29105"/>
    </ligand>
</feature>
<feature type="binding site" evidence="1">
    <location>
        <position position="825"/>
    </location>
    <ligand>
        <name>Zn(2+)</name>
        <dbReference type="ChEBI" id="CHEBI:29105"/>
    </ligand>
</feature>
<feature type="binding site" evidence="1">
    <location>
        <position position="834"/>
    </location>
    <ligand>
        <name>Zn(2+)</name>
        <dbReference type="ChEBI" id="CHEBI:29105"/>
    </ligand>
</feature>
<feature type="binding site" evidence="1">
    <location>
        <position position="835"/>
    </location>
    <ligand>
        <name>Zn(2+)</name>
        <dbReference type="ChEBI" id="CHEBI:29105"/>
    </ligand>
</feature>
<comment type="function">
    <text evidence="1">Part of the Sec protein translocase complex. Interacts with the SecYEG preprotein conducting channel. Has a central role in coupling the hydrolysis of ATP to the transfer of proteins into and across the cell membrane, serving as an ATP-driven molecular motor driving the stepwise translocation of polypeptide chains across the membrane.</text>
</comment>
<comment type="catalytic activity">
    <reaction evidence="1">
        <text>ATP + H2O + cellular proteinSide 1 = ADP + phosphate + cellular proteinSide 2.</text>
        <dbReference type="EC" id="7.4.2.8"/>
    </reaction>
</comment>
<comment type="cofactor">
    <cofactor evidence="1">
        <name>Zn(2+)</name>
        <dbReference type="ChEBI" id="CHEBI:29105"/>
    </cofactor>
    <text evidence="1">May bind 1 zinc ion per subunit.</text>
</comment>
<comment type="subunit">
    <text evidence="1">Monomer and homodimer. Part of the essential Sec protein translocation apparatus which comprises SecA, SecYEG and auxiliary proteins SecDF. Other proteins may also be involved.</text>
</comment>
<comment type="subcellular location">
    <subcellularLocation>
        <location evidence="1">Cell membrane</location>
        <topology evidence="1">Peripheral membrane protein</topology>
        <orientation evidence="1">Cytoplasmic side</orientation>
    </subcellularLocation>
    <subcellularLocation>
        <location evidence="1">Cytoplasm</location>
    </subcellularLocation>
    <text evidence="1">Distribution is 50-50.</text>
</comment>
<comment type="similarity">
    <text evidence="1">Belongs to the SecA family.</text>
</comment>